<reference key="1">
    <citation type="journal article" date="1997" name="Photosyn. Res.">
        <title>Transposon insertion in genes coding for the biosynthesis of structural components of the Anabaena sp. phycobilisome.</title>
        <authorList>
            <person name="Cai Y.A."/>
            <person name="Schwarts S.H."/>
            <person name="Glazer A.N."/>
        </authorList>
    </citation>
    <scope>NUCLEOTIDE SEQUENCE [GENOMIC DNA]</scope>
</reference>
<reference key="2">
    <citation type="journal article" date="2001" name="DNA Res.">
        <title>Complete genomic sequence of the filamentous nitrogen-fixing cyanobacterium Anabaena sp. strain PCC 7120.</title>
        <authorList>
            <person name="Kaneko T."/>
            <person name="Nakamura Y."/>
            <person name="Wolk C.P."/>
            <person name="Kuritz T."/>
            <person name="Sasamoto S."/>
            <person name="Watanabe A."/>
            <person name="Iriguchi M."/>
            <person name="Ishikawa A."/>
            <person name="Kawashima K."/>
            <person name="Kimura T."/>
            <person name="Kishida Y."/>
            <person name="Kohara M."/>
            <person name="Matsumoto M."/>
            <person name="Matsuno A."/>
            <person name="Muraki A."/>
            <person name="Nakazaki N."/>
            <person name="Shimpo S."/>
            <person name="Sugimoto M."/>
            <person name="Takazawa M."/>
            <person name="Yamada M."/>
            <person name="Yasuda M."/>
            <person name="Tabata S."/>
        </authorList>
    </citation>
    <scope>NUCLEOTIDE SEQUENCE [LARGE SCALE GENOMIC DNA]</scope>
    <source>
        <strain>PCC 7120 / SAG 25.82 / UTEX 2576</strain>
    </source>
</reference>
<reference key="3">
    <citation type="journal article" date="1996" name="Eur. J. Biochem.">
        <title>Isolation, characterization and electron microscopy analysis of a hemidiscoidal phycobilisome type from the cyanobacterium Anabaena sp. PCC 7120.</title>
        <authorList>
            <person name="Ducret A."/>
            <person name="Sidler W."/>
            <person name="Wehrli E."/>
            <person name="Frank G."/>
            <person name="Zuber H."/>
        </authorList>
    </citation>
    <scope>PROTEIN SEQUENCE OF 2-62</scope>
</reference>
<reference key="4">
    <citation type="journal article" date="2014" name="Proc. Natl. Acad. Sci. U.S.A.">
        <title>Attachment of phycobilisomes in an antenna-photosystem I supercomplex of cyanobacteria.</title>
        <authorList>
            <person name="Watanabe M."/>
            <person name="Semchonok D.A."/>
            <person name="Webber-Birungi M.T."/>
            <person name="Ehira S."/>
            <person name="Kondo K."/>
            <person name="Narikawa R."/>
            <person name="Ohmori M."/>
            <person name="Boekema E.J."/>
            <person name="Ikeuchi M."/>
        </authorList>
    </citation>
    <scope>PROTEIN SEQUENCE OF 2-21</scope>
    <scope>SUBUNIT</scope>
    <scope>SUBCELLULAR LOCATION</scope>
    <source>
        <strain>PCC 7120 / SAG 25.82 / UTEX 2576</strain>
    </source>
</reference>
<protein>
    <recommendedName>
        <fullName>Phycobilisome 7.8 kDa linker polypeptide, allophycocyanin-associated, core</fullName>
    </recommendedName>
    <alternativeName>
        <fullName>LC 7.8</fullName>
    </alternativeName>
</protein>
<accession>P80558</accession>
<sequence>MSRLFKITALVPSLSRTRTQRELQNTYFTKLVPYENWFREQQRIQKAGGKIIKVELATGKQGTNAGLQ</sequence>
<name>PYC1_NOSS1</name>
<proteinExistence type="evidence at protein level"/>
<organism>
    <name type="scientific">Nostoc sp. (strain PCC 7120 / SAG 25.82 / UTEX 2576)</name>
    <dbReference type="NCBI Taxonomy" id="103690"/>
    <lineage>
        <taxon>Bacteria</taxon>
        <taxon>Bacillati</taxon>
        <taxon>Cyanobacteriota</taxon>
        <taxon>Cyanophyceae</taxon>
        <taxon>Nostocales</taxon>
        <taxon>Nostocaceae</taxon>
        <taxon>Nostoc</taxon>
    </lineage>
</organism>
<keyword id="KW-0002">3D-structure</keyword>
<keyword id="KW-0042">Antenna complex</keyword>
<keyword id="KW-0903">Direct protein sequencing</keyword>
<keyword id="KW-0472">Membrane</keyword>
<keyword id="KW-0602">Photosynthesis</keyword>
<keyword id="KW-0605">Phycobilisome</keyword>
<keyword id="KW-1185">Reference proteome</keyword>
<keyword id="KW-0793">Thylakoid</keyword>
<evidence type="ECO:0000255" key="1">
    <source>
        <dbReference type="PROSITE-ProRule" id="PRU00771"/>
    </source>
</evidence>
<evidence type="ECO:0000269" key="2">
    <source>
    </source>
</evidence>
<evidence type="ECO:0000269" key="3">
    <source>
    </source>
</evidence>
<evidence type="ECO:0000305" key="4"/>
<dbReference type="EMBL" id="U96137">
    <property type="protein sequence ID" value="AAC97592.1"/>
    <property type="molecule type" value="Genomic_DNA"/>
</dbReference>
<dbReference type="EMBL" id="BA000019">
    <property type="protein sequence ID" value="BAB77547.1"/>
    <property type="molecule type" value="Genomic_DNA"/>
</dbReference>
<dbReference type="PIR" id="AG1809">
    <property type="entry name" value="AG1809"/>
</dbReference>
<dbReference type="RefSeq" id="WP_010994200.1">
    <property type="nucleotide sequence ID" value="NZ_RSCN01000016.1"/>
</dbReference>
<dbReference type="PDB" id="7EYD">
    <property type="method" value="EM"/>
    <property type="resolution" value="3.90 A"/>
    <property type="chains" value="29/39/49/G8/N8/U8/b8/i8=1-68"/>
</dbReference>
<dbReference type="PDBsum" id="7EYD"/>
<dbReference type="EMDB" id="EMD-31381"/>
<dbReference type="SMR" id="P80558"/>
<dbReference type="STRING" id="103690.gene:10492027"/>
<dbReference type="KEGG" id="ana:asr0023"/>
<dbReference type="eggNOG" id="ENOG5032S63">
    <property type="taxonomic scope" value="Bacteria"/>
</dbReference>
<dbReference type="OrthoDB" id="515602at2"/>
<dbReference type="Proteomes" id="UP000002483">
    <property type="component" value="Chromosome"/>
</dbReference>
<dbReference type="GO" id="GO:0030089">
    <property type="term" value="C:phycobilisome"/>
    <property type="evidence" value="ECO:0007669"/>
    <property type="project" value="UniProtKB-KW"/>
</dbReference>
<dbReference type="GO" id="GO:0031676">
    <property type="term" value="C:plasma membrane-derived thylakoid membrane"/>
    <property type="evidence" value="ECO:0007669"/>
    <property type="project" value="UniProtKB-SubCell"/>
</dbReference>
<dbReference type="GO" id="GO:0015979">
    <property type="term" value="P:photosynthesis"/>
    <property type="evidence" value="ECO:0007669"/>
    <property type="project" value="UniProtKB-KW"/>
</dbReference>
<dbReference type="Gene3D" id="3.30.1490.170">
    <property type="entry name" value="Allophycocyanin linker chain (domain)"/>
    <property type="match status" value="1"/>
</dbReference>
<dbReference type="InterPro" id="IPR011134">
    <property type="entry name" value="Allophyco_linker"/>
</dbReference>
<dbReference type="InterPro" id="IPR011064">
    <property type="entry name" value="Allophyco_linker_chain"/>
</dbReference>
<dbReference type="InterPro" id="IPR008213">
    <property type="entry name" value="CpcD-like_dom"/>
</dbReference>
<dbReference type="Pfam" id="PF01383">
    <property type="entry name" value="CpcD"/>
    <property type="match status" value="1"/>
</dbReference>
<dbReference type="PIRSF" id="PIRSF000083">
    <property type="entry name" value="Allophyco_linker"/>
    <property type="match status" value="1"/>
</dbReference>
<dbReference type="SMART" id="SM01094">
    <property type="entry name" value="CpcD"/>
    <property type="match status" value="1"/>
</dbReference>
<dbReference type="SUPFAM" id="SSF54580">
    <property type="entry name" value="Allophycocyanin linker chain (domain)"/>
    <property type="match status" value="1"/>
</dbReference>
<dbReference type="PROSITE" id="PS51441">
    <property type="entry name" value="CPCD_LIKE"/>
    <property type="match status" value="1"/>
</dbReference>
<comment type="function">
    <text>Rod linker protein, associated with allophycocyanin. Linker polypeptides determine the state of aggregation and the location of the disk-shaped phycobiliprotein units within the phycobilisome and modulate their spectroscopic properties in order to mediate a directed and optimal energy transfer.</text>
</comment>
<comment type="subcellular location">
    <subcellularLocation>
        <location evidence="2">Cellular thylakoid membrane</location>
        <topology>Peripheral membrane protein</topology>
        <orientation>Cytoplasmic side</orientation>
    </subcellularLocation>
    <text evidence="2 4">This protein occurs in the rod, it is associated with allophycocyanin.</text>
</comment>
<comment type="similarity">
    <text evidence="4">Belongs to the phycobilisome linker protein family.</text>
</comment>
<feature type="initiator methionine" description="Removed" evidence="2 3">
    <location>
        <position position="1"/>
    </location>
</feature>
<feature type="chain" id="PRO_0000199234" description="Phycobilisome 7.8 kDa linker polypeptide, allophycocyanin-associated, core">
    <location>
        <begin position="2"/>
        <end position="68"/>
    </location>
</feature>
<feature type="domain" description="CpcD-like" evidence="1">
    <location>
        <begin position="2"/>
        <end position="57"/>
    </location>
</feature>
<gene>
    <name type="primary">apcC</name>
    <name type="ordered locus">asr0023</name>
</gene>